<comment type="function">
    <text evidence="2 5">Probable FAD-dependent monooxygenase; part of the gene cluster that mediates the biosynthesis of 5-hydroxy-2-hydroxymethyl-1,4-pyrone, also know as kojic acid, a by-product in the fermentation process of malting rice that acts as a chelation agent (PubMed:36836373). Glucose might be converted to kojic acid by a combination of dehydrogenase and dehydratase reactions involving kojA and probably additional enzymes (By similarity).</text>
</comment>
<comment type="cofactor">
    <cofactor evidence="8">
        <name>FAD</name>
        <dbReference type="ChEBI" id="CHEBI:57692"/>
    </cofactor>
</comment>
<comment type="induction">
    <text evidence="5">Expression is controlled by the kojic acid gene cluster transcription factor kojR.</text>
</comment>
<comment type="biotechnology">
    <text evidence="3 4 6">Kojic acid can be used for several biotechnological applications, including use as an antibiotic, as an additive to prevent browning of food materials, and as an antioxidant (PubMed:17119644). Kojic acid is also interesting as an inhibitor of tyrosinase (PubMed:7714722). Finally, kojic acid has also been shown to have strong nematicidal activity (PubMed:27197670).</text>
</comment>
<comment type="similarity">
    <text evidence="8">Belongs to the aromatic-ring hydroxylase family.</text>
</comment>
<name>KOJA_ASPFN</name>
<proteinExistence type="evidence at protein level"/>
<dbReference type="EC" id="1.14.13.-" evidence="2"/>
<dbReference type="EMBL" id="EQ963480">
    <property type="protein sequence ID" value="EED49522.1"/>
    <property type="molecule type" value="Genomic_DNA"/>
</dbReference>
<dbReference type="EMBL" id="CP059870">
    <property type="protein sequence ID" value="QMW33428.1"/>
    <property type="molecule type" value="Genomic_DNA"/>
</dbReference>
<dbReference type="RefSeq" id="XP_002381423.1">
    <property type="nucleotide sequence ID" value="XM_002381382.1"/>
</dbReference>
<dbReference type="SMR" id="B8NL20"/>
<dbReference type="STRING" id="332952.B8NL20"/>
<dbReference type="EnsemblFungi" id="EED49522">
    <property type="protein sequence ID" value="EED49522"/>
    <property type="gene ID" value="AFLA_096040"/>
</dbReference>
<dbReference type="VEuPathDB" id="FungiDB:AFLA_009845"/>
<dbReference type="eggNOG" id="ENOG502SS48">
    <property type="taxonomic scope" value="Eukaryota"/>
</dbReference>
<dbReference type="HOGENOM" id="CLU_565958_0_0_1"/>
<dbReference type="OMA" id="LYYEGPP"/>
<dbReference type="GO" id="GO:0005737">
    <property type="term" value="C:cytoplasm"/>
    <property type="evidence" value="ECO:0007669"/>
    <property type="project" value="TreeGrafter"/>
</dbReference>
<dbReference type="GO" id="GO:0004497">
    <property type="term" value="F:monooxygenase activity"/>
    <property type="evidence" value="ECO:0007669"/>
    <property type="project" value="UniProtKB-KW"/>
</dbReference>
<dbReference type="Gene3D" id="3.30.9.10">
    <property type="entry name" value="D-Amino Acid Oxidase, subunit A, domain 2"/>
    <property type="match status" value="1"/>
</dbReference>
<dbReference type="Gene3D" id="3.50.50.60">
    <property type="entry name" value="FAD/NAD(P)-binding domain"/>
    <property type="match status" value="1"/>
</dbReference>
<dbReference type="InterPro" id="IPR006076">
    <property type="entry name" value="FAD-dep_OxRdtase"/>
</dbReference>
<dbReference type="InterPro" id="IPR036188">
    <property type="entry name" value="FAD/NAD-bd_sf"/>
</dbReference>
<dbReference type="PANTHER" id="PTHR13847:SF289">
    <property type="entry name" value="GLYCINE OXIDASE"/>
    <property type="match status" value="1"/>
</dbReference>
<dbReference type="PANTHER" id="PTHR13847">
    <property type="entry name" value="SARCOSINE DEHYDROGENASE-RELATED"/>
    <property type="match status" value="1"/>
</dbReference>
<dbReference type="Pfam" id="PF01266">
    <property type="entry name" value="DAO"/>
    <property type="match status" value="1"/>
</dbReference>
<dbReference type="SUPFAM" id="SSF51905">
    <property type="entry name" value="FAD/NAD(P)-binding domain"/>
    <property type="match status" value="1"/>
</dbReference>
<organism>
    <name type="scientific">Aspergillus flavus (strain ATCC 200026 / FGSC A1120 / IAM 13836 / NRRL 3357 / JCM 12722 / SRRC 167)</name>
    <dbReference type="NCBI Taxonomy" id="332952"/>
    <lineage>
        <taxon>Eukaryota</taxon>
        <taxon>Fungi</taxon>
        <taxon>Dikarya</taxon>
        <taxon>Ascomycota</taxon>
        <taxon>Pezizomycotina</taxon>
        <taxon>Eurotiomycetes</taxon>
        <taxon>Eurotiomycetidae</taxon>
        <taxon>Eurotiales</taxon>
        <taxon>Aspergillaceae</taxon>
        <taxon>Aspergillus</taxon>
        <taxon>Aspergillus subgen. Circumdati</taxon>
    </lineage>
</organism>
<reference key="1">
    <citation type="journal article" date="2015" name="Genome Announc.">
        <title>Genome sequence of Aspergillus flavus NRRL 3357, a strain that causes aflatoxin contamination of food and feed.</title>
        <authorList>
            <person name="Nierman W.C."/>
            <person name="Yu J."/>
            <person name="Fedorova-Abrams N.D."/>
            <person name="Losada L."/>
            <person name="Cleveland T.E."/>
            <person name="Bhatnagar D."/>
            <person name="Bennett J.W."/>
            <person name="Dean R."/>
            <person name="Payne G.A."/>
        </authorList>
    </citation>
    <scope>NUCLEOTIDE SEQUENCE [LARGE SCALE GENOMIC DNA]</scope>
    <source>
        <strain>ATCC 200026 / FGSC A1120 / IAM 13836 / NRRL 3357 / JCM 12722 / SRRC 167</strain>
    </source>
</reference>
<reference key="2">
    <citation type="submission" date="2020-07" db="EMBL/GenBank/DDBJ databases">
        <title>Two New Chromosome-Level Aspergillus flavus Reference Genomes Reveal a Large Insertion Potentially Contributing to Isolate Stress Tolerance and Aflatoxin Production.</title>
        <authorList>
            <person name="Fountain J.C."/>
            <person name="Clevenger J.P."/>
            <person name="Nadon B."/>
            <person name="Youngblood R.C."/>
            <person name="Korani W."/>
            <person name="Chang P.-K."/>
            <person name="Starr D."/>
            <person name="Wang H."/>
            <person name="Isett B."/>
            <person name="Johnston H.R."/>
            <person name="Wiggins R."/>
            <person name="Chu Y."/>
            <person name="Agarwal G."/>
            <person name="Kemerait R.C."/>
            <person name="Pandey M.K."/>
            <person name="Bhatnagar D."/>
            <person name="Ozias-Akins P."/>
            <person name="Varshney R.K."/>
            <person name="Scheffler B.E."/>
            <person name="Vaughn J.N."/>
            <person name="Guo B."/>
        </authorList>
    </citation>
    <scope>NUCLEOTIDE SEQUENCE [LARGE SCALE GENOMIC DNA]</scope>
    <source>
        <strain>ATCC 200026 / FGSC A1120 / IAM 13836 / NRRL 3357 / JCM 12722 / SRRC 167</strain>
    </source>
</reference>
<reference key="3">
    <citation type="journal article" date="1994" name="J. Pharm. Pharmacol.">
        <title>Kojic acid, a cosmetic skin whitening agent, is a slow-binding inhibitor of catecholase activity of tyrosinase.</title>
        <authorList>
            <person name="Cabanes J."/>
            <person name="Chazarra S."/>
            <person name="Garcia-Carmona F."/>
        </authorList>
    </citation>
    <scope>BIOTECHNOLOGY</scope>
</reference>
<reference key="4">
    <citation type="journal article" date="2006" name="Nat. Prod. Rep.">
        <title>From miso, sake and shoyu to cosmetics: a century of science for kojic acid.</title>
        <authorList>
            <person name="Bentley R."/>
        </authorList>
    </citation>
    <scope>REVIEW ON BIOTECHNOLOGY</scope>
</reference>
<reference key="5">
    <citation type="journal article" date="2016" name="J. Microbiol. Biotechnol.">
        <title>Nematicidal activity of kojic acid produced by Aspergillus oryzae against Meloidogyne incognita.</title>
        <authorList>
            <person name="Kim T.Y."/>
            <person name="Jang J.Y."/>
            <person name="Jeon S.J."/>
            <person name="Lee H.W."/>
            <person name="Bae C.H."/>
            <person name="Yeo J.H."/>
            <person name="Lee H.B."/>
            <person name="Kim I.S."/>
            <person name="Park H.W."/>
            <person name="Kim J.C."/>
        </authorList>
    </citation>
    <scope>BIOTECHNOLOGY</scope>
</reference>
<reference key="6">
    <citation type="journal article" date="2023" name="J. Fungi">
        <title>Kojic Acid Gene Clusters and the Transcriptional Activation Mechanism of Aspergillus flavus KojR on Expression of Clustered Genes.</title>
        <authorList>
            <person name="Chang P.K."/>
            <person name="Scharfenstein L.L."/>
            <person name="Mahoney N."/>
            <person name="Kong Q."/>
        </authorList>
    </citation>
    <scope>FUNCTION</scope>
    <scope>INDUCTION</scope>
</reference>
<accession>B8NL20</accession>
<gene>
    <name evidence="7" type="primary">kojA</name>
    <name type="ORF">AFLA_096040</name>
    <name type="ORF">G4B84_008859</name>
</gene>
<sequence>MRVATQLRVGIVGGGWNGCHLALELKKQGHRVSLFEQKPDIFQGVSGNFGIRLHKGPHYPRSKATRDSCREALVKFCETYPELVVHHESAIYAHGEADALGNPSKVSDEAFRDVCYESPECTAVDPKANGFQGLISAYNLDEPSVAIGDRLRNTFKEKLGRAGIYVHLNATVDRIIHTEDTNRIQTGDGQYVFDVVINATGYTSLLPQNIADALPVDIGITYQTCIALVYEDQQPQEKPLSFIVMDGWFPCVMPAIDTNEPLQKKYILTHGSYTILGSFDRHEEGQELLDSLDEEAIAARIKPHCEREITRFWPGFLDRFQYRGWKGSVLAKLKTTSEFRSSLTFEKDGVIHIFPGKVSNVVTAAEEVVPLINDIARRRHGVVREWNGVRFTVSSAFHTHSKEIGDKPGLGEHHTSNLQTYVSLVTAN</sequence>
<feature type="chain" id="PRO_0000458975" description="FAD-dependent monooxygenase kojA">
    <location>
        <begin position="1"/>
        <end position="428"/>
    </location>
</feature>
<feature type="binding site" evidence="1">
    <location>
        <begin position="52"/>
        <end position="60"/>
    </location>
    <ligand>
        <name>FAD</name>
        <dbReference type="ChEBI" id="CHEBI:57692"/>
    </ligand>
</feature>
<feature type="binding site" evidence="1">
    <location>
        <begin position="328"/>
        <end position="329"/>
    </location>
    <ligand>
        <name>FAD</name>
        <dbReference type="ChEBI" id="CHEBI:57692"/>
    </ligand>
</feature>
<feature type="site" description="Important for catalytic activity" evidence="1">
    <location>
        <position position="421"/>
    </location>
</feature>
<keyword id="KW-0274">FAD</keyword>
<keyword id="KW-0285">Flavoprotein</keyword>
<keyword id="KW-0503">Monooxygenase</keyword>
<keyword id="KW-0560">Oxidoreductase</keyword>
<evidence type="ECO:0000250" key="1">
    <source>
        <dbReference type="UniProtKB" id="P20586"/>
    </source>
</evidence>
<evidence type="ECO:0000250" key="2">
    <source>
        <dbReference type="UniProtKB" id="Q2U5I0"/>
    </source>
</evidence>
<evidence type="ECO:0000269" key="3">
    <source>
    </source>
</evidence>
<evidence type="ECO:0000269" key="4">
    <source>
    </source>
</evidence>
<evidence type="ECO:0000269" key="5">
    <source>
    </source>
</evidence>
<evidence type="ECO:0000269" key="6">
    <source>
    </source>
</evidence>
<evidence type="ECO:0000303" key="7">
    <source>
    </source>
</evidence>
<evidence type="ECO:0000305" key="8"/>
<protein>
    <recommendedName>
        <fullName evidence="7">FAD-dependent monooxygenase kojA</fullName>
        <ecNumber evidence="2">1.14.13.-</ecNumber>
    </recommendedName>
    <alternativeName>
        <fullName evidence="7">Kojic acid biosynthesis cluster protein A</fullName>
    </alternativeName>
</protein>